<accession>P54011</accession>
<proteinExistence type="inferred from homology"/>
<protein>
    <recommendedName>
        <fullName evidence="3">Large ribosomal subunit protein eL37</fullName>
    </recommendedName>
    <alternativeName>
        <fullName>50S ribosomal protein L37e</fullName>
    </alternativeName>
</protein>
<keyword id="KW-0479">Metal-binding</keyword>
<keyword id="KW-1185">Reference proteome</keyword>
<keyword id="KW-0687">Ribonucleoprotein</keyword>
<keyword id="KW-0689">Ribosomal protein</keyword>
<keyword id="KW-0694">RNA-binding</keyword>
<keyword id="KW-0699">rRNA-binding</keyword>
<keyword id="KW-0862">Zinc</keyword>
<keyword id="KW-0863">Zinc-finger</keyword>
<organism>
    <name type="scientific">Methanocaldococcus jannaschii (strain ATCC 43067 / DSM 2661 / JAL-1 / JCM 10045 / NBRC 100440)</name>
    <name type="common">Methanococcus jannaschii</name>
    <dbReference type="NCBI Taxonomy" id="243232"/>
    <lineage>
        <taxon>Archaea</taxon>
        <taxon>Methanobacteriati</taxon>
        <taxon>Methanobacteriota</taxon>
        <taxon>Methanomada group</taxon>
        <taxon>Methanococci</taxon>
        <taxon>Methanococcales</taxon>
        <taxon>Methanocaldococcaceae</taxon>
        <taxon>Methanocaldococcus</taxon>
    </lineage>
</organism>
<feature type="chain" id="PRO_0000139729" description="Large ribosomal subunit protein eL37">
    <location>
        <begin position="1"/>
        <end position="61"/>
    </location>
</feature>
<feature type="zinc finger region" description="C4-type" evidence="2">
    <location>
        <begin position="20"/>
        <end position="38"/>
    </location>
</feature>
<feature type="binding site" evidence="1">
    <location>
        <position position="20"/>
    </location>
    <ligand>
        <name>Zn(2+)</name>
        <dbReference type="ChEBI" id="CHEBI:29105"/>
    </ligand>
</feature>
<feature type="binding site" evidence="1">
    <location>
        <position position="23"/>
    </location>
    <ligand>
        <name>Zn(2+)</name>
        <dbReference type="ChEBI" id="CHEBI:29105"/>
    </ligand>
</feature>
<feature type="binding site" evidence="1">
    <location>
        <position position="35"/>
    </location>
    <ligand>
        <name>Zn(2+)</name>
        <dbReference type="ChEBI" id="CHEBI:29105"/>
    </ligand>
</feature>
<feature type="binding site" evidence="1">
    <location>
        <position position="38"/>
    </location>
    <ligand>
        <name>Zn(2+)</name>
        <dbReference type="ChEBI" id="CHEBI:29105"/>
    </ligand>
</feature>
<evidence type="ECO:0000250" key="1"/>
<evidence type="ECO:0000255" key="2"/>
<evidence type="ECO:0000305" key="3"/>
<sequence length="61" mass="7258">MSKGTPSMGKRNKGSYHIRCRRCGRRAYHVRKKRCAACGFPNKRMRKYSWQNKKVNGKRIK</sequence>
<comment type="function">
    <text evidence="1">Binds to the 23S rRNA.</text>
</comment>
<comment type="cofactor">
    <cofactor evidence="1">
        <name>Zn(2+)</name>
        <dbReference type="ChEBI" id="CHEBI:29105"/>
    </cofactor>
    <text evidence="1">Binds 1 zinc ion per subunit.</text>
</comment>
<comment type="similarity">
    <text evidence="3">Belongs to the eukaryotic ribosomal protein eL37 family.</text>
</comment>
<gene>
    <name type="primary">rpl37e</name>
    <name type="ordered locus">MJ0098</name>
</gene>
<name>RL37_METJA</name>
<dbReference type="EMBL" id="L77117">
    <property type="protein sequence ID" value="AAB98078.1"/>
    <property type="molecule type" value="Genomic_DNA"/>
</dbReference>
<dbReference type="PIR" id="B64312">
    <property type="entry name" value="B64312"/>
</dbReference>
<dbReference type="RefSeq" id="WP_010869590.1">
    <property type="nucleotide sequence ID" value="NC_000909.1"/>
</dbReference>
<dbReference type="SMR" id="P54011"/>
<dbReference type="FunCoup" id="P54011">
    <property type="interactions" value="113"/>
</dbReference>
<dbReference type="STRING" id="243232.MJ_0098"/>
<dbReference type="PaxDb" id="243232-MJ_0098"/>
<dbReference type="EnsemblBacteria" id="AAB98078">
    <property type="protein sequence ID" value="AAB98078"/>
    <property type="gene ID" value="MJ_0098"/>
</dbReference>
<dbReference type="GeneID" id="1450937"/>
<dbReference type="KEGG" id="mja:MJ_0098"/>
<dbReference type="eggNOG" id="arCOG04126">
    <property type="taxonomic scope" value="Archaea"/>
</dbReference>
<dbReference type="HOGENOM" id="CLU_208825_0_0_2"/>
<dbReference type="InParanoid" id="P54011"/>
<dbReference type="OrthoDB" id="5619at2157"/>
<dbReference type="PhylomeDB" id="P54011"/>
<dbReference type="Proteomes" id="UP000000805">
    <property type="component" value="Chromosome"/>
</dbReference>
<dbReference type="GO" id="GO:0022625">
    <property type="term" value="C:cytosolic large ribosomal subunit"/>
    <property type="evidence" value="ECO:0000318"/>
    <property type="project" value="GO_Central"/>
</dbReference>
<dbReference type="GO" id="GO:0003723">
    <property type="term" value="F:RNA binding"/>
    <property type="evidence" value="ECO:0000318"/>
    <property type="project" value="GO_Central"/>
</dbReference>
<dbReference type="GO" id="GO:0019843">
    <property type="term" value="F:rRNA binding"/>
    <property type="evidence" value="ECO:0007669"/>
    <property type="project" value="UniProtKB-KW"/>
</dbReference>
<dbReference type="GO" id="GO:0003735">
    <property type="term" value="F:structural constituent of ribosome"/>
    <property type="evidence" value="ECO:0007669"/>
    <property type="project" value="InterPro"/>
</dbReference>
<dbReference type="GO" id="GO:0008270">
    <property type="term" value="F:zinc ion binding"/>
    <property type="evidence" value="ECO:0007669"/>
    <property type="project" value="UniProtKB-UniRule"/>
</dbReference>
<dbReference type="GO" id="GO:0006412">
    <property type="term" value="P:translation"/>
    <property type="evidence" value="ECO:0007669"/>
    <property type="project" value="UniProtKB-UniRule"/>
</dbReference>
<dbReference type="FunFam" id="2.20.25.30:FF:000003">
    <property type="entry name" value="50S ribosomal protein L37e"/>
    <property type="match status" value="1"/>
</dbReference>
<dbReference type="Gene3D" id="2.20.25.30">
    <property type="match status" value="1"/>
</dbReference>
<dbReference type="HAMAP" id="MF_00547">
    <property type="entry name" value="Ribosomal_eL37"/>
    <property type="match status" value="1"/>
</dbReference>
<dbReference type="InterPro" id="IPR001569">
    <property type="entry name" value="Ribosomal_eL37"/>
</dbReference>
<dbReference type="InterPro" id="IPR011331">
    <property type="entry name" value="Ribosomal_eL37/eL43"/>
</dbReference>
<dbReference type="InterPro" id="IPR018267">
    <property type="entry name" value="Ribosomal_eL37_CS"/>
</dbReference>
<dbReference type="InterPro" id="IPR011332">
    <property type="entry name" value="Ribosomal_zn-bd"/>
</dbReference>
<dbReference type="NCBIfam" id="NF003214">
    <property type="entry name" value="PRK04179.1"/>
    <property type="match status" value="1"/>
</dbReference>
<dbReference type="PANTHER" id="PTHR10768">
    <property type="entry name" value="60S RIBOSOMAL PROTEIN L37"/>
    <property type="match status" value="1"/>
</dbReference>
<dbReference type="PANTHER" id="PTHR10768:SF0">
    <property type="entry name" value="RIBOSOMAL PROTEIN L37"/>
    <property type="match status" value="1"/>
</dbReference>
<dbReference type="Pfam" id="PF01907">
    <property type="entry name" value="Ribosomal_L37e"/>
    <property type="match status" value="1"/>
</dbReference>
<dbReference type="SUPFAM" id="SSF57829">
    <property type="entry name" value="Zn-binding ribosomal proteins"/>
    <property type="match status" value="1"/>
</dbReference>
<dbReference type="PROSITE" id="PS01077">
    <property type="entry name" value="RIBOSOMAL_L37E"/>
    <property type="match status" value="1"/>
</dbReference>
<reference key="1">
    <citation type="journal article" date="1996" name="Science">
        <title>Complete genome sequence of the methanogenic archaeon, Methanococcus jannaschii.</title>
        <authorList>
            <person name="Bult C.J."/>
            <person name="White O."/>
            <person name="Olsen G.J."/>
            <person name="Zhou L."/>
            <person name="Fleischmann R.D."/>
            <person name="Sutton G.G."/>
            <person name="Blake J.A."/>
            <person name="FitzGerald L.M."/>
            <person name="Clayton R.A."/>
            <person name="Gocayne J.D."/>
            <person name="Kerlavage A.R."/>
            <person name="Dougherty B.A."/>
            <person name="Tomb J.-F."/>
            <person name="Adams M.D."/>
            <person name="Reich C.I."/>
            <person name="Overbeek R."/>
            <person name="Kirkness E.F."/>
            <person name="Weinstock K.G."/>
            <person name="Merrick J.M."/>
            <person name="Glodek A."/>
            <person name="Scott J.L."/>
            <person name="Geoghagen N.S.M."/>
            <person name="Weidman J.F."/>
            <person name="Fuhrmann J.L."/>
            <person name="Nguyen D."/>
            <person name="Utterback T.R."/>
            <person name="Kelley J.M."/>
            <person name="Peterson J.D."/>
            <person name="Sadow P.W."/>
            <person name="Hanna M.C."/>
            <person name="Cotton M.D."/>
            <person name="Roberts K.M."/>
            <person name="Hurst M.A."/>
            <person name="Kaine B.P."/>
            <person name="Borodovsky M."/>
            <person name="Klenk H.-P."/>
            <person name="Fraser C.M."/>
            <person name="Smith H.O."/>
            <person name="Woese C.R."/>
            <person name="Venter J.C."/>
        </authorList>
    </citation>
    <scope>NUCLEOTIDE SEQUENCE [LARGE SCALE GENOMIC DNA]</scope>
    <source>
        <strain>ATCC 43067 / DSM 2661 / JAL-1 / JCM 10045 / NBRC 100440</strain>
    </source>
</reference>